<sequence length="145" mass="15568">MKQQKDASKPAHFFHQVIVIALVLFVSKIIESFMPIPMPASVIGLVLLFVLLCTGAVKLGEVEKVGTTLTNNIGLLFVPAGISVVNSLGVISQAPFLIIGLIIVSTILLLICTGYVTQIIMKVTSRSKGDKVTKKVKIEEAQAHD</sequence>
<evidence type="ECO:0000255" key="1">
    <source>
        <dbReference type="HAMAP-Rule" id="MF_01141"/>
    </source>
</evidence>
<proteinExistence type="inferred from homology"/>
<accession>A6TY47</accession>
<gene>
    <name evidence="1" type="primary">lrgA</name>
    <name type="ordered locus">SaurJH1_0253</name>
</gene>
<feature type="chain" id="PRO_1000085029" description="Antiholin-like protein LrgA">
    <location>
        <begin position="1"/>
        <end position="145"/>
    </location>
</feature>
<feature type="transmembrane region" description="Helical" evidence="1">
    <location>
        <begin position="10"/>
        <end position="30"/>
    </location>
</feature>
<feature type="transmembrane region" description="Helical" evidence="1">
    <location>
        <begin position="33"/>
        <end position="53"/>
    </location>
</feature>
<feature type="transmembrane region" description="Helical" evidence="1">
    <location>
        <begin position="72"/>
        <end position="92"/>
    </location>
</feature>
<feature type="transmembrane region" description="Helical" evidence="1">
    <location>
        <begin position="96"/>
        <end position="116"/>
    </location>
</feature>
<reference key="1">
    <citation type="submission" date="2007-06" db="EMBL/GenBank/DDBJ databases">
        <title>Complete sequence of chromosome of Staphylococcus aureus subsp. aureus JH1.</title>
        <authorList>
            <consortium name="US DOE Joint Genome Institute"/>
            <person name="Copeland A."/>
            <person name="Lucas S."/>
            <person name="Lapidus A."/>
            <person name="Barry K."/>
            <person name="Detter J.C."/>
            <person name="Glavina del Rio T."/>
            <person name="Hammon N."/>
            <person name="Israni S."/>
            <person name="Dalin E."/>
            <person name="Tice H."/>
            <person name="Pitluck S."/>
            <person name="Chain P."/>
            <person name="Malfatti S."/>
            <person name="Shin M."/>
            <person name="Vergez L."/>
            <person name="Schmutz J."/>
            <person name="Larimer F."/>
            <person name="Land M."/>
            <person name="Hauser L."/>
            <person name="Kyrpides N."/>
            <person name="Ivanova N."/>
            <person name="Tomasz A."/>
            <person name="Richardson P."/>
        </authorList>
    </citation>
    <scope>NUCLEOTIDE SEQUENCE [LARGE SCALE GENOMIC DNA]</scope>
    <source>
        <strain>JH1</strain>
    </source>
</reference>
<name>LRGA_STAA2</name>
<protein>
    <recommendedName>
        <fullName evidence="1">Antiholin-like protein LrgA</fullName>
    </recommendedName>
</protein>
<keyword id="KW-1003">Cell membrane</keyword>
<keyword id="KW-0204">Cytolysis</keyword>
<keyword id="KW-0472">Membrane</keyword>
<keyword id="KW-0812">Transmembrane</keyword>
<keyword id="KW-1133">Transmembrane helix</keyword>
<organism>
    <name type="scientific">Staphylococcus aureus (strain JH1)</name>
    <dbReference type="NCBI Taxonomy" id="359787"/>
    <lineage>
        <taxon>Bacteria</taxon>
        <taxon>Bacillati</taxon>
        <taxon>Bacillota</taxon>
        <taxon>Bacilli</taxon>
        <taxon>Bacillales</taxon>
        <taxon>Staphylococcaceae</taxon>
        <taxon>Staphylococcus</taxon>
    </lineage>
</organism>
<dbReference type="EMBL" id="CP000736">
    <property type="protein sequence ID" value="ABR51115.1"/>
    <property type="molecule type" value="Genomic_DNA"/>
</dbReference>
<dbReference type="SMR" id="A6TY47"/>
<dbReference type="KEGG" id="sah:SaurJH1_0253"/>
<dbReference type="HOGENOM" id="CLU_113736_0_1_9"/>
<dbReference type="GO" id="GO:0005886">
    <property type="term" value="C:plasma membrane"/>
    <property type="evidence" value="ECO:0007669"/>
    <property type="project" value="UniProtKB-SubCell"/>
</dbReference>
<dbReference type="GO" id="GO:0019835">
    <property type="term" value="P:cytolysis"/>
    <property type="evidence" value="ECO:0007669"/>
    <property type="project" value="UniProtKB-UniRule"/>
</dbReference>
<dbReference type="GO" id="GO:0031640">
    <property type="term" value="P:killing of cells of another organism"/>
    <property type="evidence" value="ECO:0007669"/>
    <property type="project" value="UniProtKB-KW"/>
</dbReference>
<dbReference type="GO" id="GO:0012501">
    <property type="term" value="P:programmed cell death"/>
    <property type="evidence" value="ECO:0007669"/>
    <property type="project" value="UniProtKB-UniRule"/>
</dbReference>
<dbReference type="HAMAP" id="MF_01141">
    <property type="entry name" value="LrgA"/>
    <property type="match status" value="1"/>
</dbReference>
<dbReference type="InterPro" id="IPR023736">
    <property type="entry name" value="Antiholin-like_LrgA"/>
</dbReference>
<dbReference type="InterPro" id="IPR005538">
    <property type="entry name" value="LrgA/CidA"/>
</dbReference>
<dbReference type="NCBIfam" id="NF003155">
    <property type="entry name" value="PRK04125.1"/>
    <property type="match status" value="1"/>
</dbReference>
<dbReference type="PANTHER" id="PTHR33931:SF4">
    <property type="entry name" value="ANTIHOLIN-LIKE PROTEIN LRGA"/>
    <property type="match status" value="1"/>
</dbReference>
<dbReference type="PANTHER" id="PTHR33931">
    <property type="entry name" value="HOLIN-LIKE PROTEIN CIDA-RELATED"/>
    <property type="match status" value="1"/>
</dbReference>
<dbReference type="Pfam" id="PF03788">
    <property type="entry name" value="LrgA"/>
    <property type="match status" value="1"/>
</dbReference>
<comment type="function">
    <text evidence="1">Inhibits the expression or activity of extracellular murein hydrolases by interacting, possibly with LrgB, with the holin-like proteins CidA and/or CidB. The LrgAB and CidAB proteins may affect the proton motive force of the membrane. May be involved in programmed cell death (PCD), possibly triggering PCD in response to antibiotics and environmental stresses.</text>
</comment>
<comment type="subcellular location">
    <subcellularLocation>
        <location evidence="1">Cell membrane</location>
        <topology evidence="1">Multi-pass membrane protein</topology>
    </subcellularLocation>
</comment>
<comment type="similarity">
    <text evidence="1">Belongs to the CidA/LrgA family. LrgA subfamily.</text>
</comment>